<keyword id="KW-0002">3D-structure</keyword>
<keyword id="KW-0456">Lyase</keyword>
<keyword id="KW-1185">Reference proteome</keyword>
<protein>
    <recommendedName>
        <fullName evidence="1">Methylglyoxal synthase</fullName>
        <shortName evidence="1">MGS</shortName>
        <ecNumber evidence="1">4.2.3.3</ecNumber>
    </recommendedName>
</protein>
<name>MGSA_BORBU</name>
<feature type="chain" id="PRO_0000178614" description="Methylglyoxal synthase">
    <location>
        <begin position="1"/>
        <end position="126"/>
    </location>
</feature>
<feature type="domain" description="MGS-like" evidence="1">
    <location>
        <begin position="1"/>
        <end position="126"/>
    </location>
</feature>
<feature type="active site" description="Proton donor/acceptor" evidence="1">
    <location>
        <position position="62"/>
    </location>
</feature>
<feature type="binding site" evidence="1">
    <location>
        <position position="10"/>
    </location>
    <ligand>
        <name>substrate</name>
    </ligand>
</feature>
<feature type="binding site" evidence="1">
    <location>
        <position position="14"/>
    </location>
    <ligand>
        <name>substrate</name>
    </ligand>
</feature>
<feature type="binding site" evidence="1">
    <location>
        <begin position="36"/>
        <end position="39"/>
    </location>
    <ligand>
        <name>substrate</name>
    </ligand>
</feature>
<feature type="binding site" evidence="1">
    <location>
        <begin position="56"/>
        <end position="57"/>
    </location>
    <ligand>
        <name>substrate</name>
    </ligand>
</feature>
<feature type="binding site" evidence="1">
    <location>
        <position position="89"/>
    </location>
    <ligand>
        <name>substrate</name>
    </ligand>
</feature>
<organism>
    <name type="scientific">Borreliella burgdorferi (strain ATCC 35210 / DSM 4680 / CIP 102532 / B31)</name>
    <name type="common">Borrelia burgdorferi</name>
    <dbReference type="NCBI Taxonomy" id="224326"/>
    <lineage>
        <taxon>Bacteria</taxon>
        <taxon>Pseudomonadati</taxon>
        <taxon>Spirochaetota</taxon>
        <taxon>Spirochaetia</taxon>
        <taxon>Spirochaetales</taxon>
        <taxon>Borreliaceae</taxon>
        <taxon>Borreliella</taxon>
    </lineage>
</organism>
<sequence>MEKKIALIAHDKKKEDLVNFVKQNYLFLSKFKLIATGTTGSKIQQATDLTIFKYKSGPMGGDQQIGAEVAEGNILAIFFFRDPLTSQPHEPDVSALIRLCDVHKIPLATNVKTAEILIKGLESLIF</sequence>
<comment type="function">
    <text evidence="1">Catalyzes the formation of methylglyoxal from dihydroxyacetone phosphate.</text>
</comment>
<comment type="catalytic activity">
    <reaction evidence="1">
        <text>dihydroxyacetone phosphate = methylglyoxal + phosphate</text>
        <dbReference type="Rhea" id="RHEA:17937"/>
        <dbReference type="ChEBI" id="CHEBI:17158"/>
        <dbReference type="ChEBI" id="CHEBI:43474"/>
        <dbReference type="ChEBI" id="CHEBI:57642"/>
        <dbReference type="EC" id="4.2.3.3"/>
    </reaction>
</comment>
<comment type="similarity">
    <text evidence="1 2">Belongs to the methylglyoxal synthase family.</text>
</comment>
<gene>
    <name evidence="1" type="primary">mgsA</name>
    <name type="ordered locus">BB_0364</name>
</gene>
<evidence type="ECO:0000255" key="1">
    <source>
        <dbReference type="HAMAP-Rule" id="MF_00549"/>
    </source>
</evidence>
<evidence type="ECO:0000305" key="2"/>
<reference key="1">
    <citation type="journal article" date="1997" name="Nature">
        <title>Genomic sequence of a Lyme disease spirochaete, Borrelia burgdorferi.</title>
        <authorList>
            <person name="Fraser C.M."/>
            <person name="Casjens S."/>
            <person name="Huang W.M."/>
            <person name="Sutton G.G."/>
            <person name="Clayton R.A."/>
            <person name="Lathigra R."/>
            <person name="White O."/>
            <person name="Ketchum K.A."/>
            <person name="Dodson R.J."/>
            <person name="Hickey E.K."/>
            <person name="Gwinn M.L."/>
            <person name="Dougherty B.A."/>
            <person name="Tomb J.-F."/>
            <person name="Fleischmann R.D."/>
            <person name="Richardson D.L."/>
            <person name="Peterson J.D."/>
            <person name="Kerlavage A.R."/>
            <person name="Quackenbush J."/>
            <person name="Salzberg S.L."/>
            <person name="Hanson M."/>
            <person name="van Vugt R."/>
            <person name="Palmer N."/>
            <person name="Adams M.D."/>
            <person name="Gocayne J.D."/>
            <person name="Weidman J.F."/>
            <person name="Utterback T.R."/>
            <person name="Watthey L."/>
            <person name="McDonald L.A."/>
            <person name="Artiach P."/>
            <person name="Bowman C."/>
            <person name="Garland S.A."/>
            <person name="Fujii C."/>
            <person name="Cotton M.D."/>
            <person name="Horst K."/>
            <person name="Roberts K.M."/>
            <person name="Hatch B."/>
            <person name="Smith H.O."/>
            <person name="Venter J.C."/>
        </authorList>
    </citation>
    <scope>NUCLEOTIDE SEQUENCE [LARGE SCALE GENOMIC DNA]</scope>
    <source>
        <strain>ATCC 35210 / DSM 4680 / CIP 102532 / B31</strain>
    </source>
</reference>
<dbReference type="EC" id="4.2.3.3" evidence="1"/>
<dbReference type="EMBL" id="AE000783">
    <property type="protein sequence ID" value="AAC66749.1"/>
    <property type="molecule type" value="Genomic_DNA"/>
</dbReference>
<dbReference type="PIR" id="C70145">
    <property type="entry name" value="C70145"/>
</dbReference>
<dbReference type="RefSeq" id="NP_212498.1">
    <property type="nucleotide sequence ID" value="NC_001318.1"/>
</dbReference>
<dbReference type="RefSeq" id="WP_002657078.1">
    <property type="nucleotide sequence ID" value="NC_001318.1"/>
</dbReference>
<dbReference type="PDB" id="8U2V">
    <property type="method" value="X-ray"/>
    <property type="resolution" value="2.50 A"/>
    <property type="chains" value="A/B/C=1-126"/>
</dbReference>
<dbReference type="PDBsum" id="8U2V"/>
<dbReference type="SMR" id="O51339"/>
<dbReference type="STRING" id="224326.BB_0364"/>
<dbReference type="PaxDb" id="224326-BB_0364"/>
<dbReference type="EnsemblBacteria" id="AAC66749">
    <property type="protein sequence ID" value="AAC66749"/>
    <property type="gene ID" value="BB_0364"/>
</dbReference>
<dbReference type="GeneID" id="56567792"/>
<dbReference type="KEGG" id="bbu:BB_0364"/>
<dbReference type="PATRIC" id="fig|224326.49.peg.759"/>
<dbReference type="HOGENOM" id="CLU_120420_1_0_12"/>
<dbReference type="OrthoDB" id="9787147at2"/>
<dbReference type="Proteomes" id="UP000001807">
    <property type="component" value="Chromosome"/>
</dbReference>
<dbReference type="GO" id="GO:0005829">
    <property type="term" value="C:cytosol"/>
    <property type="evidence" value="ECO:0007669"/>
    <property type="project" value="TreeGrafter"/>
</dbReference>
<dbReference type="GO" id="GO:0008929">
    <property type="term" value="F:methylglyoxal synthase activity"/>
    <property type="evidence" value="ECO:0007669"/>
    <property type="project" value="UniProtKB-UniRule"/>
</dbReference>
<dbReference type="GO" id="GO:0019242">
    <property type="term" value="P:methylglyoxal biosynthetic process"/>
    <property type="evidence" value="ECO:0007669"/>
    <property type="project" value="UniProtKB-UniRule"/>
</dbReference>
<dbReference type="CDD" id="cd01422">
    <property type="entry name" value="MGS"/>
    <property type="match status" value="1"/>
</dbReference>
<dbReference type="Gene3D" id="3.40.50.1380">
    <property type="entry name" value="Methylglyoxal synthase-like domain"/>
    <property type="match status" value="1"/>
</dbReference>
<dbReference type="HAMAP" id="MF_00549">
    <property type="entry name" value="Methylglyoxal_synth"/>
    <property type="match status" value="1"/>
</dbReference>
<dbReference type="InterPro" id="IPR004363">
    <property type="entry name" value="Methylgl_synth"/>
</dbReference>
<dbReference type="InterPro" id="IPR018148">
    <property type="entry name" value="Methylglyoxal_synth_AS"/>
</dbReference>
<dbReference type="InterPro" id="IPR011607">
    <property type="entry name" value="MGS-like_dom"/>
</dbReference>
<dbReference type="InterPro" id="IPR036914">
    <property type="entry name" value="MGS-like_dom_sf"/>
</dbReference>
<dbReference type="NCBIfam" id="TIGR00160">
    <property type="entry name" value="MGSA"/>
    <property type="match status" value="1"/>
</dbReference>
<dbReference type="NCBIfam" id="NF003559">
    <property type="entry name" value="PRK05234.1"/>
    <property type="match status" value="1"/>
</dbReference>
<dbReference type="PANTHER" id="PTHR30492">
    <property type="entry name" value="METHYLGLYOXAL SYNTHASE"/>
    <property type="match status" value="1"/>
</dbReference>
<dbReference type="PANTHER" id="PTHR30492:SF0">
    <property type="entry name" value="METHYLGLYOXAL SYNTHASE"/>
    <property type="match status" value="1"/>
</dbReference>
<dbReference type="Pfam" id="PF02142">
    <property type="entry name" value="MGS"/>
    <property type="match status" value="1"/>
</dbReference>
<dbReference type="PIRSF" id="PIRSF006614">
    <property type="entry name" value="Methylglyox_syn"/>
    <property type="match status" value="1"/>
</dbReference>
<dbReference type="SMART" id="SM00851">
    <property type="entry name" value="MGS"/>
    <property type="match status" value="1"/>
</dbReference>
<dbReference type="SUPFAM" id="SSF52335">
    <property type="entry name" value="Methylglyoxal synthase-like"/>
    <property type="match status" value="1"/>
</dbReference>
<dbReference type="PROSITE" id="PS01335">
    <property type="entry name" value="METHYLGLYOXAL_SYNTH"/>
    <property type="match status" value="1"/>
</dbReference>
<dbReference type="PROSITE" id="PS51855">
    <property type="entry name" value="MGS"/>
    <property type="match status" value="1"/>
</dbReference>
<proteinExistence type="evidence at protein level"/>
<accession>O51339</accession>